<proteinExistence type="evidence at protein level"/>
<accession>C5IY46</accession>
<accession>C5IY47</accession>
<sequence length="670" mass="75402">MPPIKRQPGGWVLPGYKYLGPFNPLENGEPVNKADRAAQAHDKSYSELIKSGKNPYLYFNKADEKFIDDLKDDWSLGGIIGSSFFKLKRAVAPALGNKERAQKRHFYFANSNKGAKKTKNNEPKPGTSKMSENEIQDQQPSDSMDGQRGGGGGATGSVGGGKGSGVGISTGGWVGGSYFTDSYVITKNTRQFLVKIQNNHQYKTELISPSTSQGKSQRCVSTPWSYFNFNQYSSHFSPQDWQRLTNEYKRFRPKGMHVKIYNLQIKQILSNGADTTYNNDLTAGVHIFCDGEHAYPNATHPWDEDVMPELPYQTWYLFQYGYIPVIHELAEMEDSNAVEKAICLQIPFFMLENSDHEVLRTGESTEFTFNFDCEWINNERAYIPPGLMFNPLVPTRRAQYIRRNNNPQTAESTSRIAPYAKPTSWMTGPGLLSAQRVGPATSDTGAWMVAVKPENASIDTGMSGIGSGFDPPQGSLAPTNLEYKIQWYQTPQGTNNNGNIISNQPLSMLRDQALFRGNQTTYNLCSDVWMFPNQIWDRYPITRENPIWCKKPRSDKHTTIDPFDGSLAMDHPPGTIFIKMAKIPVPSNNNADSYLNIYCTGQVSCEIVWEVERYATKNWRPERRHTTFGLGIGGADNLNPTYHVDKNGTYIQPTTWDMCFPVKTNINKVL</sequence>
<evidence type="ECO:0000250" key="1">
    <source>
        <dbReference type="UniProtKB" id="Q3YPH4"/>
    </source>
</evidence>
<evidence type="ECO:0000250" key="2">
    <source>
        <dbReference type="UniProtKB" id="Q9PZT0"/>
    </source>
</evidence>
<evidence type="ECO:0000256" key="3">
    <source>
        <dbReference type="SAM" id="MobiDB-lite"/>
    </source>
</evidence>
<evidence type="ECO:0000269" key="4">
    <source>
    </source>
</evidence>
<evidence type="ECO:0000305" key="5"/>
<evidence type="ECO:0000305" key="6">
    <source>
    </source>
</evidence>
<organismHost>
    <name type="scientific">Homo sapiens</name>
    <name type="common">Human</name>
    <dbReference type="NCBI Taxonomy" id="9606"/>
</organismHost>
<gene>
    <name type="primary">VP1</name>
</gene>
<protein>
    <recommendedName>
        <fullName>Minor capsid protein VP1</fullName>
        <ecNumber evidence="1">3.1.1.4</ecNumber>
    </recommendedName>
</protein>
<organism>
    <name type="scientific">Human bocavirus 4</name>
    <name type="common">HBoV4</name>
    <name type="synonym">Human bocavirus type 4</name>
    <dbReference type="NCBI Taxonomy" id="1511883"/>
    <lineage>
        <taxon>Viruses</taxon>
        <taxon>Monodnaviria</taxon>
        <taxon>Shotokuvirae</taxon>
        <taxon>Cossaviricota</taxon>
        <taxon>Quintoviricetes</taxon>
        <taxon>Piccovirales</taxon>
        <taxon>Parvoviridae</taxon>
        <taxon>Parvovirinae</taxon>
        <taxon>Bocaparvovirus</taxon>
        <taxon>Bocaparvovirus primate2</taxon>
    </lineage>
</organism>
<reference key="1">
    <citation type="journal article" date="2010" name="J. Infect. Dis.">
        <title>Human bocaviruses are highly diverse, dispersed, recombination prone, and prevalent in enteric infections.</title>
        <authorList>
            <person name="Kapoor A."/>
            <person name="Simmonds P."/>
            <person name="Slikas E."/>
            <person name="Li L."/>
            <person name="Bodhidatta L."/>
            <person name="Sethabutr O."/>
            <person name="Triki H."/>
            <person name="Bahri O."/>
            <person name="Oderinde B.S."/>
            <person name="Baba M.M."/>
            <person name="Bukbuk D.N."/>
            <person name="Besser J."/>
            <person name="Bartkus J."/>
            <person name="Delwart E."/>
        </authorList>
    </citation>
    <scope>NUCLEOTIDE SEQUENCE [LARGE SCALE GENOMIC DNA]</scope>
    <source>
        <strain>HBoV4-NI-385</strain>
    </source>
</reference>
<reference key="2">
    <citation type="journal article" date="2017" name="J. Virol.">
        <title>Structural Insights into Human Bocaparvoviruses.</title>
        <authorList>
            <person name="Mietzsch M."/>
            <person name="Kailasan S."/>
            <person name="Garrison J."/>
            <person name="Ilyas M."/>
            <person name="Chipman P."/>
            <person name="Kantola K."/>
            <person name="Janssen M.E."/>
            <person name="Spear J."/>
            <person name="Sousa D."/>
            <person name="McKenna R."/>
            <person name="Brown K."/>
            <person name="Soderlund-Venermo M."/>
            <person name="Baker T."/>
            <person name="Agbandje-McKenna M."/>
        </authorList>
    </citation>
    <scope>STRUCTURE BY ELECTRON MICROSCOPY (3.00 ANGSTROMS)</scope>
    <scope>FUNCTION</scope>
    <scope>SUBUNIT</scope>
    <scope>SUBCELLULAR LOCATION</scope>
</reference>
<feature type="chain" id="PRO_0000445384" description="Minor capsid protein VP1">
    <location>
        <begin position="1"/>
        <end position="670"/>
    </location>
</feature>
<feature type="region of interest" description="Phospholipase A2-like" evidence="1">
    <location>
        <begin position="11"/>
        <end position="66"/>
    </location>
</feature>
<feature type="region of interest" description="Disordered" evidence="3">
    <location>
        <begin position="106"/>
        <end position="162"/>
    </location>
</feature>
<feature type="short sequence motif" description="Nuclear localization signal" evidence="2">
    <location>
        <begin position="613"/>
        <end position="624"/>
    </location>
</feature>
<feature type="compositionally biased region" description="Gly residues" evidence="3">
    <location>
        <begin position="147"/>
        <end position="162"/>
    </location>
</feature>
<feature type="splice variant" id="VSP_059861" description="In isoform Major capsid protein VP3.">
    <location>
        <begin position="1"/>
        <end position="129"/>
    </location>
</feature>
<feature type="splice variant" id="VSP_059862" description="In isoform Minor capsid protein VP2.">
    <location>
        <begin position="1"/>
        <end position="90"/>
    </location>
</feature>
<feature type="splice variant" id="VSP_059866" description="In isoform Minor capsid protein VP2.">
    <original>V</original>
    <variation>M</variation>
    <location>
        <position position="91"/>
    </location>
</feature>
<keyword id="KW-0002">3D-structure</keyword>
<keyword id="KW-0024">Alternative initiation</keyword>
<keyword id="KW-0167">Capsid protein</keyword>
<keyword id="KW-1035">Host cytoplasm</keyword>
<keyword id="KW-1048">Host nucleus</keyword>
<keyword id="KW-0378">Hydrolase</keyword>
<keyword id="KW-0442">Lipid degradation</keyword>
<keyword id="KW-0443">Lipid metabolism</keyword>
<keyword id="KW-1140">T=1 icosahedral capsid protein</keyword>
<keyword id="KW-0946">Virion</keyword>
<name>CAPSD_HBOC4</name>
<comment type="function">
    <text evidence="2 4 6">Capsid proteins self-assembles to form an icosahedral capsid with a T=1 symmetry, about 26 nm in diameter, and consisting of 60 copies of three size variants of the capsid proteins, VP1, and VP3, which differ by the presence of an N-terminal extension in the minor protein VP1. The capsid has a channel at the 5-fold axis and there are densities extending the 5-fold axis into the interior of the capsid (PubMed:28331084). The capsid encapsulates the genomic ssDNA (Probable). Binding to the host receptors also induces capsid rearrangements leading to surface exposure of VP1 N-terminus, specifically its phospholipase A2-like region. The additional N-terminal region of isoform Minor capsid protein VP1, called VP1u, may serve as a lipolytic enzyme to breach the endosomal membrane during entry into host cell and might contribute to virus transport to the nucleus (By similarity).</text>
</comment>
<comment type="catalytic activity">
    <reaction evidence="1">
        <text>a 1,2-diacyl-sn-glycero-3-phosphocholine + H2O = a 1-acyl-sn-glycero-3-phosphocholine + a fatty acid + H(+)</text>
        <dbReference type="Rhea" id="RHEA:15801"/>
        <dbReference type="ChEBI" id="CHEBI:15377"/>
        <dbReference type="ChEBI" id="CHEBI:15378"/>
        <dbReference type="ChEBI" id="CHEBI:28868"/>
        <dbReference type="ChEBI" id="CHEBI:57643"/>
        <dbReference type="ChEBI" id="CHEBI:58168"/>
        <dbReference type="EC" id="3.1.1.4"/>
    </reaction>
</comment>
<comment type="subunit">
    <molecule>Isoform Minor capsid protein VP1</molecule>
    <text evidence="1">Heteromultimer of isoform Minor capsid protein VP1, isoform Minor capsid protein VP2 and isoform Major capsid protein VP3 (By similarity).</text>
</comment>
<comment type="subunit">
    <molecule>Isoform Minor capsid protein VP2</molecule>
    <text evidence="1">Heteromultimer of isoform Minor capsid protein VP1, isoform Minor capsid protein VP2 and isoform Major capsid protein VP3 (By similarity).</text>
</comment>
<comment type="subunit">
    <molecule>Isoform Major capsid protein VP3</molecule>
    <text evidence="1 4">Homomultimer (By similarity). 10 fold more abundant than the minor capsid proteins VP1 and VP2 (PubMed:28331084). Heteromultimer of isoform Minor capsid protein VP1, isoform Minor capsid protein VP2 and isoform Major capsid protein VP3 (By similarity).</text>
</comment>
<comment type="subcellular location">
    <molecule>Isoform Minor capsid protein VP1</molecule>
    <subcellularLocation>
        <location evidence="1">Virion</location>
    </subcellularLocation>
    <subcellularLocation>
        <location evidence="1">Host nucleus</location>
    </subcellularLocation>
    <subcellularLocation>
        <location evidence="1">Host cytoplasm</location>
    </subcellularLocation>
    <text evidence="1">Slightly detected in the cytoplasm, mainly seen in the nucleus.</text>
</comment>
<comment type="subcellular location">
    <molecule>Isoform Minor capsid protein VP2</molecule>
    <subcellularLocation>
        <location evidence="1">Virion</location>
    </subcellularLocation>
</comment>
<comment type="subcellular location">
    <molecule>Isoform Major capsid protein VP3</molecule>
    <subcellularLocation>
        <location evidence="4">Virion</location>
    </subcellularLocation>
    <subcellularLocation>
        <location evidence="1">Host nucleus</location>
    </subcellularLocation>
    <subcellularLocation>
        <location evidence="1">Host cytoplasm</location>
    </subcellularLocation>
    <text evidence="1">Slightly detected in the cytoplasm, mainly seen in the nucleus.</text>
</comment>
<comment type="alternative products">
    <event type="alternative initiation"/>
    <isoform>
        <id>C5IY46-1</id>
        <name>Minor capsid protein VP1</name>
        <sequence type="displayed"/>
    </isoform>
    <isoform>
        <id>C5IY46-2</id>
        <name>Minor capsid protein VP2</name>
        <sequence type="described" ref="VSP_059862 VSP_059866"/>
    </isoform>
    <isoform>
        <id>C5IY46-3</id>
        <name>Major capsid protein VP3</name>
        <sequence type="described" ref="VSP_059861"/>
    </isoform>
    <text evidence="1">The VP-encoding mRNA generates the three capsid proteins. Minor capsid protein VP1 and Major capsid protein VP3 initiate at canonical initiation site, whereas Minor capsid protein VP2 initiates at a GCT codon (By similarity).</text>
</comment>
<comment type="domain">
    <text evidence="1 2">The N-terminus of Isoform Minor capsid protein VP1, VP1u, contains a phospholipase A2-like region (By similarity). VP1u may play a role in the disruption of host tight junctions in the airway tract (By similarity).</text>
</comment>
<comment type="domain">
    <molecule>Isoform Minor capsid protein VP1</molecule>
    <text evidence="2">A nuclear localization signal is present in the C-terminus and can be recognized by cellular nuclear import molecules. After assembly, it is hidden because it is on the inner capsid surface.</text>
</comment>
<comment type="similarity">
    <text evidence="5">Belongs to the parvoviridae capsid protein family.</text>
</comment>
<comment type="caution">
    <text evidence="5">Isoform major capsid protein VP3 has former been designated as VP2.</text>
</comment>
<dbReference type="EC" id="3.1.1.4" evidence="1"/>
<dbReference type="EMBL" id="FJ973561">
    <property type="protein sequence ID" value="ACR15782.1"/>
    <property type="molecule type" value="Genomic_DNA"/>
</dbReference>
<dbReference type="EMBL" id="FJ973561">
    <property type="protein sequence ID" value="ACR15781.1"/>
    <property type="molecule type" value="Genomic_DNA"/>
</dbReference>
<dbReference type="RefSeq" id="YP_002916062.1">
    <molecule id="C5IY46-1"/>
    <property type="nucleotide sequence ID" value="NC_012729.2"/>
</dbReference>
<dbReference type="RefSeq" id="YP_002916063.1">
    <molecule id="C5IY46-3"/>
    <property type="nucleotide sequence ID" value="NC_012729.2"/>
</dbReference>
<dbReference type="PDB" id="5US9">
    <property type="method" value="EM"/>
    <property type="resolution" value="3.00 A"/>
    <property type="chains" value="1/2/3/4/5/6/7/8/A/B/C/D/E/F/G/H/I/J/K/L/M/N/O/P/Q/R/S/T/U/V/W/X/Y/Z/a/b/c/d/e/f/g/h/i/j/k/l/m/n/o/p/q/r/s/t/u/v/w/x/y/z=130-670"/>
</dbReference>
<dbReference type="PDBsum" id="5US9"/>
<dbReference type="EMDB" id="EMD-8605"/>
<dbReference type="SMR" id="C5IY46"/>
<dbReference type="DNASU" id="7922603"/>
<dbReference type="GeneID" id="7922602"/>
<dbReference type="KEGG" id="vg:7922602"/>
<dbReference type="KEGG" id="vg:7922603"/>
<dbReference type="OrthoDB" id="1726at10239"/>
<dbReference type="Proteomes" id="UP000106086">
    <property type="component" value="Genome"/>
</dbReference>
<dbReference type="GO" id="GO:0030430">
    <property type="term" value="C:host cell cytoplasm"/>
    <property type="evidence" value="ECO:0007669"/>
    <property type="project" value="UniProtKB-SubCell"/>
</dbReference>
<dbReference type="GO" id="GO:0042025">
    <property type="term" value="C:host cell nucleus"/>
    <property type="evidence" value="ECO:0007669"/>
    <property type="project" value="UniProtKB-SubCell"/>
</dbReference>
<dbReference type="GO" id="GO:0039615">
    <property type="term" value="C:T=1 icosahedral viral capsid"/>
    <property type="evidence" value="ECO:0007669"/>
    <property type="project" value="UniProtKB-KW"/>
</dbReference>
<dbReference type="GO" id="GO:0004623">
    <property type="term" value="F:phospholipase A2 activity"/>
    <property type="evidence" value="ECO:0007669"/>
    <property type="project" value="UniProtKB-EC"/>
</dbReference>
<dbReference type="GO" id="GO:0005198">
    <property type="term" value="F:structural molecule activity"/>
    <property type="evidence" value="ECO:0007669"/>
    <property type="project" value="InterPro"/>
</dbReference>
<dbReference type="GO" id="GO:0016042">
    <property type="term" value="P:lipid catabolic process"/>
    <property type="evidence" value="ECO:0007669"/>
    <property type="project" value="UniProtKB-KW"/>
</dbReference>
<dbReference type="Gene3D" id="2.170.30.10">
    <property type="entry name" value="Parvovirus coat protein VP1/VP2"/>
    <property type="match status" value="1"/>
</dbReference>
<dbReference type="InterPro" id="IPR016184">
    <property type="entry name" value="Capsid/spike_ssDNA_virus"/>
</dbReference>
<dbReference type="InterPro" id="IPR001403">
    <property type="entry name" value="Parvovirus_coat"/>
</dbReference>
<dbReference type="InterPro" id="IPR013607">
    <property type="entry name" value="Phospholipase_A2-like"/>
</dbReference>
<dbReference type="InterPro" id="IPR036952">
    <property type="entry name" value="VP1/VP2"/>
</dbReference>
<dbReference type="Pfam" id="PF00740">
    <property type="entry name" value="Parvo_coat"/>
    <property type="match status" value="2"/>
</dbReference>
<dbReference type="Pfam" id="PF08398">
    <property type="entry name" value="Phospholip_A2_4"/>
    <property type="match status" value="1"/>
</dbReference>
<dbReference type="SUPFAM" id="SSF88645">
    <property type="entry name" value="ssDNA viruses"/>
    <property type="match status" value="1"/>
</dbReference>